<proteinExistence type="evidence at protein level"/>
<protein>
    <recommendedName>
        <fullName>Mannosyl-oligosaccharide 1,2-alpha-mannosidase IA</fullName>
        <ecNumber evidence="3">3.2.1.113</ecNumber>
    </recommendedName>
    <alternativeName>
        <fullName>Man(9)-alpha-mannosidase</fullName>
        <shortName>Man9-mannosidase</shortName>
    </alternativeName>
    <alternativeName>
        <fullName>Mannosidase alpha class 1A member 1</fullName>
    </alternativeName>
    <alternativeName>
        <fullName>Processing alpha-1,2-mannosidase IA</fullName>
        <shortName>Alpha-1,2-mannosidase IA</shortName>
    </alternativeName>
</protein>
<comment type="function">
    <text>Involved in the maturation of Asn-linked oligosaccharides. Progressively trim alpha-1,2-linked mannose residues from Man(9)GlcNAc(2) to produce Man(5)GlcNAc(2).</text>
</comment>
<comment type="catalytic activity">
    <reaction evidence="3">
        <text>N(4)-(alpha-D-Man-(1-&gt;2)-alpha-D-Man-(1-&gt;2)-alpha-D-Man-(1-&gt;3)-[alpha-D-Man-(1-&gt;2)-alpha-D-Man-(1-&gt;3)-[alpha-D-Man-(1-&gt;2)-alpha-D-Man-(1-&gt;6)]-alpha-D-Man-(1-&gt;6)]-beta-D-Man-(1-&gt;4)-beta-D-GlcNAc-(1-&gt;4)-beta-D-GlcNAc)-L-asparaginyl-[protein] (N-glucan mannose isomer 9A1,2,3B1,2,3) + 4 H2O = N(4)-(alpha-D-Man-(1-&gt;3)-[alpha-D-Man-(1-&gt;3)-[alpha-D-Man-(1-&gt;6)]-alpha-D-Man-(1-&gt;6)]-beta-D-Man-(1-&gt;4)-beta-D-GlcNAc-(1-&gt;4)-beta-D-GlcNAc)-L-asparaginyl-[protein] (N-glucan mannose isomer 5A1,2) + 4 beta-D-mannose</text>
        <dbReference type="Rhea" id="RHEA:56008"/>
        <dbReference type="Rhea" id="RHEA-COMP:14356"/>
        <dbReference type="Rhea" id="RHEA-COMP:14367"/>
        <dbReference type="ChEBI" id="CHEBI:15377"/>
        <dbReference type="ChEBI" id="CHEBI:28563"/>
        <dbReference type="ChEBI" id="CHEBI:59087"/>
        <dbReference type="ChEBI" id="CHEBI:139493"/>
        <dbReference type="EC" id="3.2.1.113"/>
    </reaction>
</comment>
<comment type="catalytic activity">
    <reaction evidence="3">
        <text>N(4)-(alpha-D-Man-(1-&gt;2)-alpha-D-Man-(1-&gt;2)-alpha-D-Man-(1-&gt;3)-[alpha-D-Man-(1-&gt;3)-[alpha-D-Man-(1-&gt;2)-alpha-D-Man-(1-&gt;6)]-alpha-D-Man-(1-&gt;6)]-beta-D-Man-(1-&gt;4)-beta-D-GlcNAc-(1-&gt;4)-beta-D-GlcNAc)-L-asparaginyl-[protein] (N-glucan mannose isomer 8A1,2,3B1,3) + 3 H2O = N(4)-(alpha-D-Man-(1-&gt;3)-[alpha-D-Man-(1-&gt;3)-[alpha-D-Man-(1-&gt;6)]-alpha-D-Man-(1-&gt;6)]-beta-D-Man-(1-&gt;4)-beta-D-GlcNAc-(1-&gt;4)-beta-D-GlcNAc)-L-asparaginyl-[protein] (N-glucan mannose isomer 5A1,2) + 3 beta-D-mannose</text>
        <dbReference type="Rhea" id="RHEA:56028"/>
        <dbReference type="Rhea" id="RHEA-COMP:14358"/>
        <dbReference type="Rhea" id="RHEA-COMP:14367"/>
        <dbReference type="ChEBI" id="CHEBI:15377"/>
        <dbReference type="ChEBI" id="CHEBI:28563"/>
        <dbReference type="ChEBI" id="CHEBI:59087"/>
        <dbReference type="ChEBI" id="CHEBI:60628"/>
        <dbReference type="EC" id="3.2.1.113"/>
    </reaction>
</comment>
<comment type="cofactor">
    <cofactor evidence="4">
        <name>Ca(2+)</name>
        <dbReference type="ChEBI" id="CHEBI:29108"/>
    </cofactor>
</comment>
<comment type="activity regulation">
    <text evidence="1">Inhibited by both 1-deoxymannojirimycin and kifunensine.</text>
</comment>
<comment type="pathway">
    <text evidence="3">Protein modification; protein glycosylation.</text>
</comment>
<comment type="subcellular location">
    <subcellularLocation>
        <location evidence="7">Endoplasmic reticulum membrane</location>
        <topology evidence="7">Single-pass type II membrane protein</topology>
    </subcellularLocation>
</comment>
<comment type="similarity">
    <text evidence="8">Belongs to the glycosyl hydrolase 47 family.</text>
</comment>
<gene>
    <name type="primary">MAN1A1</name>
    <name type="synonym">MAN1A</name>
</gene>
<evidence type="ECO:0000250" key="1"/>
<evidence type="ECO:0000250" key="2">
    <source>
        <dbReference type="UniProtKB" id="P31723"/>
    </source>
</evidence>
<evidence type="ECO:0000250" key="3">
    <source>
        <dbReference type="UniProtKB" id="P32906"/>
    </source>
</evidence>
<evidence type="ECO:0000250" key="4">
    <source>
        <dbReference type="UniProtKB" id="P45700"/>
    </source>
</evidence>
<evidence type="ECO:0000255" key="5"/>
<evidence type="ECO:0000256" key="6">
    <source>
        <dbReference type="SAM" id="MobiDB-lite"/>
    </source>
</evidence>
<evidence type="ECO:0000269" key="7">
    <source>
    </source>
</evidence>
<evidence type="ECO:0000305" key="8"/>
<keyword id="KW-0106">Calcium</keyword>
<keyword id="KW-0903">Direct protein sequencing</keyword>
<keyword id="KW-1015">Disulfide bond</keyword>
<keyword id="KW-0256">Endoplasmic reticulum</keyword>
<keyword id="KW-0326">Glycosidase</keyword>
<keyword id="KW-0378">Hydrolase</keyword>
<keyword id="KW-0472">Membrane</keyword>
<keyword id="KW-0479">Metal-binding</keyword>
<keyword id="KW-1185">Reference proteome</keyword>
<keyword id="KW-0735">Signal-anchor</keyword>
<keyword id="KW-0812">Transmembrane</keyword>
<keyword id="KW-1133">Transmembrane helix</keyword>
<dbReference type="EC" id="3.2.1.113" evidence="3"/>
<dbReference type="EMBL" id="Y12503">
    <property type="protein sequence ID" value="CAA73105.1"/>
    <property type="molecule type" value="mRNA"/>
</dbReference>
<dbReference type="PIR" id="S78554">
    <property type="entry name" value="S78554"/>
</dbReference>
<dbReference type="RefSeq" id="NP_999050.1">
    <property type="nucleotide sequence ID" value="NM_213885.1"/>
</dbReference>
<dbReference type="SMR" id="O02773"/>
<dbReference type="FunCoup" id="O02773">
    <property type="interactions" value="1804"/>
</dbReference>
<dbReference type="STRING" id="9823.ENSSSCP00000004583"/>
<dbReference type="CAZy" id="GH47">
    <property type="family name" value="Glycoside Hydrolase Family 47"/>
</dbReference>
<dbReference type="PaxDb" id="9823-ENSSSCP00000004583"/>
<dbReference type="PeptideAtlas" id="O02773"/>
<dbReference type="GeneID" id="396919"/>
<dbReference type="KEGG" id="ssc:396919"/>
<dbReference type="CTD" id="4121"/>
<dbReference type="eggNOG" id="KOG2204">
    <property type="taxonomic scope" value="Eukaryota"/>
</dbReference>
<dbReference type="InParanoid" id="O02773"/>
<dbReference type="OrthoDB" id="8118055at2759"/>
<dbReference type="UniPathway" id="UPA00378"/>
<dbReference type="Proteomes" id="UP000008227">
    <property type="component" value="Unplaced"/>
</dbReference>
<dbReference type="Proteomes" id="UP000314985">
    <property type="component" value="Unplaced"/>
</dbReference>
<dbReference type="Proteomes" id="UP000694570">
    <property type="component" value="Unplaced"/>
</dbReference>
<dbReference type="Proteomes" id="UP000694571">
    <property type="component" value="Unplaced"/>
</dbReference>
<dbReference type="Proteomes" id="UP000694720">
    <property type="component" value="Unplaced"/>
</dbReference>
<dbReference type="Proteomes" id="UP000694722">
    <property type="component" value="Unplaced"/>
</dbReference>
<dbReference type="Proteomes" id="UP000694723">
    <property type="component" value="Unplaced"/>
</dbReference>
<dbReference type="Proteomes" id="UP000694724">
    <property type="component" value="Unplaced"/>
</dbReference>
<dbReference type="Proteomes" id="UP000694725">
    <property type="component" value="Unplaced"/>
</dbReference>
<dbReference type="Proteomes" id="UP000694726">
    <property type="component" value="Unplaced"/>
</dbReference>
<dbReference type="Proteomes" id="UP000694727">
    <property type="component" value="Unplaced"/>
</dbReference>
<dbReference type="Proteomes" id="UP000694728">
    <property type="component" value="Unplaced"/>
</dbReference>
<dbReference type="GO" id="GO:0005783">
    <property type="term" value="C:endoplasmic reticulum"/>
    <property type="evidence" value="ECO:0000318"/>
    <property type="project" value="GO_Central"/>
</dbReference>
<dbReference type="GO" id="GO:0005789">
    <property type="term" value="C:endoplasmic reticulum membrane"/>
    <property type="evidence" value="ECO:0007669"/>
    <property type="project" value="UniProtKB-SubCell"/>
</dbReference>
<dbReference type="GO" id="GO:0000139">
    <property type="term" value="C:Golgi membrane"/>
    <property type="evidence" value="ECO:0000318"/>
    <property type="project" value="GO_Central"/>
</dbReference>
<dbReference type="GO" id="GO:0005509">
    <property type="term" value="F:calcium ion binding"/>
    <property type="evidence" value="ECO:0007669"/>
    <property type="project" value="InterPro"/>
</dbReference>
<dbReference type="GO" id="GO:0004571">
    <property type="term" value="F:mannosyl-oligosaccharide 1,2-alpha-mannosidase activity"/>
    <property type="evidence" value="ECO:0000318"/>
    <property type="project" value="GO_Central"/>
</dbReference>
<dbReference type="GO" id="GO:0005975">
    <property type="term" value="P:carbohydrate metabolic process"/>
    <property type="evidence" value="ECO:0007669"/>
    <property type="project" value="InterPro"/>
</dbReference>
<dbReference type="GO" id="GO:0036503">
    <property type="term" value="P:ERAD pathway"/>
    <property type="evidence" value="ECO:0000318"/>
    <property type="project" value="GO_Central"/>
</dbReference>
<dbReference type="GO" id="GO:0006486">
    <property type="term" value="P:protein glycosylation"/>
    <property type="evidence" value="ECO:0007669"/>
    <property type="project" value="UniProtKB-UniPathway"/>
</dbReference>
<dbReference type="FunFam" id="1.50.10.10:FF:000002">
    <property type="entry name" value="alpha-1,2-Mannosidase"/>
    <property type="match status" value="1"/>
</dbReference>
<dbReference type="Gene3D" id="1.50.10.10">
    <property type="match status" value="1"/>
</dbReference>
<dbReference type="InterPro" id="IPR012341">
    <property type="entry name" value="6hp_glycosidase-like_sf"/>
</dbReference>
<dbReference type="InterPro" id="IPR001382">
    <property type="entry name" value="Glyco_hydro_47"/>
</dbReference>
<dbReference type="InterPro" id="IPR050749">
    <property type="entry name" value="Glycosyl_Hydrolase_47"/>
</dbReference>
<dbReference type="InterPro" id="IPR036026">
    <property type="entry name" value="Seven-hairpin_glycosidases"/>
</dbReference>
<dbReference type="PANTHER" id="PTHR11742:SF31">
    <property type="entry name" value="MANNOSYL-OLIGOSACCHARIDE 1,2-ALPHA-MANNOSIDASE IA"/>
    <property type="match status" value="1"/>
</dbReference>
<dbReference type="PANTHER" id="PTHR11742">
    <property type="entry name" value="MANNOSYL-OLIGOSACCHARIDE ALPHA-1,2-MANNOSIDASE-RELATED"/>
    <property type="match status" value="1"/>
</dbReference>
<dbReference type="Pfam" id="PF01532">
    <property type="entry name" value="Glyco_hydro_47"/>
    <property type="match status" value="1"/>
</dbReference>
<dbReference type="PRINTS" id="PR00747">
    <property type="entry name" value="GLYHDRLASE47"/>
</dbReference>
<dbReference type="SUPFAM" id="SSF48225">
    <property type="entry name" value="Seven-hairpin glycosidases"/>
    <property type="match status" value="1"/>
</dbReference>
<accession>O02773</accession>
<name>MA1A1_PIG</name>
<organism>
    <name type="scientific">Sus scrofa</name>
    <name type="common">Pig</name>
    <dbReference type="NCBI Taxonomy" id="9823"/>
    <lineage>
        <taxon>Eukaryota</taxon>
        <taxon>Metazoa</taxon>
        <taxon>Chordata</taxon>
        <taxon>Craniata</taxon>
        <taxon>Vertebrata</taxon>
        <taxon>Euteleostomi</taxon>
        <taxon>Mammalia</taxon>
        <taxon>Eutheria</taxon>
        <taxon>Laurasiatheria</taxon>
        <taxon>Artiodactyla</taxon>
        <taxon>Suina</taxon>
        <taxon>Suidae</taxon>
        <taxon>Sus</taxon>
    </lineage>
</organism>
<reference key="1">
    <citation type="journal article" date="1997" name="Eur. J. Biochem.">
        <title>Man9-mannosidase from pig liver is a type-II membrane protein that resides in the endoplasmic reticulum. cDNA cloning and expression of the enzyme in COS 1 cells.</title>
        <authorList>
            <person name="Bieberich E."/>
            <person name="Treml K."/>
            <person name="Volker C."/>
            <person name="Rolfs A."/>
            <person name="Kalz-Fueller B."/>
            <person name="Bause E."/>
        </authorList>
    </citation>
    <scope>NUCLEOTIDE SEQUENCE [MRNA]</scope>
    <scope>PARTIAL PROTEIN SEQUENCE</scope>
    <scope>SUBCELLULAR LOCATION</scope>
    <source>
        <tissue>Liver</tissue>
    </source>
</reference>
<reference key="2">
    <citation type="journal article" date="1993" name="Eur. J. Biochem.">
        <title>Molecular cloning and primary structure of Man9-mannosidase from human kidney.</title>
        <authorList>
            <person name="Bause E."/>
            <person name="Bieberich E."/>
            <person name="Rolfs A."/>
            <person name="Voelker C."/>
            <person name="Schmidt B."/>
        </authorList>
    </citation>
    <scope>PARTIAL PROTEIN SEQUENCE</scope>
</reference>
<feature type="chain" id="PRO_0000210310" description="Mannosyl-oligosaccharide 1,2-alpha-mannosidase IA">
    <location>
        <begin position="1"/>
        <end position="659"/>
    </location>
</feature>
<feature type="topological domain" description="Cytoplasmic" evidence="5">
    <location>
        <begin position="1"/>
        <end position="48"/>
    </location>
</feature>
<feature type="transmembrane region" description="Helical; Signal-anchor for type II membrane protein" evidence="5">
    <location>
        <begin position="49"/>
        <end position="69"/>
    </location>
</feature>
<feature type="topological domain" description="Lumenal" evidence="5">
    <location>
        <begin position="70"/>
        <end position="659"/>
    </location>
</feature>
<feature type="region of interest" description="Disordered" evidence="6">
    <location>
        <begin position="88"/>
        <end position="121"/>
    </location>
</feature>
<feature type="compositionally biased region" description="Basic and acidic residues" evidence="6">
    <location>
        <begin position="91"/>
        <end position="113"/>
    </location>
</feature>
<feature type="active site" description="Proton donor" evidence="2">
    <location>
        <position position="528"/>
    </location>
</feature>
<feature type="binding site" evidence="3">
    <location>
        <position position="639"/>
    </location>
    <ligand>
        <name>Ca(2+)</name>
        <dbReference type="ChEBI" id="CHEBI:29108"/>
    </ligand>
</feature>
<feature type="disulfide bond" evidence="3">
    <location>
        <begin position="482"/>
        <end position="514"/>
    </location>
</feature>
<sequence length="659" mass="73197">MPVGGLLPLFSSPAGGGLGGGLGGGLGGGGGGGGRKGSGPSAFRLTEKFVLLLVFSAFITLCFGAIFFLPDSSKLLSGVLFHSSPALQPAADHKPGPGARAEDAADGRARPGEEGAPGDPAAALEDNLARIRENHERALMEAKETLQKLPEEIQRDILMEKEKVAQDQMSNRMGFRLPPVYLVPLIGAIDREPADAAVREKRAKIKEMMKHAWNNYKLYAWGKNELKPVSKGGHSSSLFGNIKGATIVDALDTLFIMKMKNEFEEAKAWVEEHLNFNVNAEVSVFEVNIRFIGGLISAYYLSGEEIFRKKAVELGVKLLPAFYTPSGIPWALLNIKSGIGRNWPWASGGSSILAEFGTLHLEFIHLSYLSGNPFFAEKVMNIRKVLNNLEKPQGLYPNYLNPNSGQWGQYHVSVGGLGDSFYEYLLKAWLMSDKTDLEAKKMYFDAIKAIETHLIRKSRNGLTYIAEWKGGLLEHKMGHLTCFAGGMFALGADDAPDGLTQHYLQLGAEIARTCHESYSRTFVKLGPEAFRFDGGVEAIATRQNEKYYILRPEVVETYLYMWRLTHDPKYRKWAWEAVEALEKHCRVNGGYSGLRDVYVSAQTYDDVQQSFFLAETLKYLYLIFSDDDLLPLEHWIFNTEAHPLPVLSRNIKKVEDNEK</sequence>